<sequence length="1192" mass="135414">MEAFEISDFKEHAKKKSMWAGALNKVTISGLMGVFTEDEDLMALPIHRDHCPALLKIFDEIIVNATDHERACHSKTKKVTYIKISFNKGVFSCENDGPGIPIAKHEQASLIAKRDVYVPEVASCHFLAGTNINKAKDCIKGGTNGVGLKLAMVHSQWAILTTADGAQKYVQHINQRLDIIEPPTITPSREMFTRIELMPVYQELGYAEPLSETEQADLSAWIYLRACQCAAYVGKGTTIYYNEKPCRTGSVMALAKMYTLLSAPNGTIHTATIKADAKPYSLHPLQVAAVVSPKFKKFEHVSIINGVNCVKGEHVTFLKKTINEIVVKKFQQTIKDKNRKTTLRDSCSNIFIVIVGSIPGIEWTGQRKDELSIAENVFKTHYSIPSSFLTSMTKSIVDILLQSISKKDNHKQVDVDKYTRARNAGGKRAQDCMLLAAEGDSALSLLRTGLTLGKSNPSGPSFDFCGMISLGGVIMNACKKVTNITTDSGETIMVRNEQLTNNKVLQGIVQVLGLDFNCHYKTQEERAKLRYGCIVACVDQDLDGCGKILGLLLAYFHLFWPQLIIHGFVKRLLTPLIRVYEKGKTVPVEFYYEQEFDAWAKKQTSLANHTVKYYKGLAAHDTHEVKSMFKHFDNMVYTFTLDDSAKELFHIYFGGESELRKRELCTGVVPLTETQTQSIHSVRRIPCSLHLQVDTKAYKLDAIERQIPNFLDGMTRARRKILAGGVKCFASNNRERKVFQFGGYVADHMFYHHGDMSLNTSIIKAAQYYPGSSHLYPVFIGIGSFGSRHLGGKDAGSPRYISVQLASEFIKTMFPAEDSWLLPYVFEDGQRAEPEYYVPVLPLAIMEYGANPSEGWKYTTWARQLEDILALVRAYVDKNNPKHELLHYAIKHKITILPLRPSNYNFKGHLKRFGQYYYSYGTYVISEQRNIITITELPLRVPTVAYIESIKKSSNRMTFIEEIIDYSSSETIEILVKLKPNSLNRIMEEFKCTEEQDSIENFLRLRNCLHSHLNFVKPKGGIIEFNTYYEILYAWLPYRRELYQKRLMREHAVLKLRIIMETAIVRYINESAELNLSHYEDEKEASRILSEHGFPPLNQTLIISPEFASIEELNQKALQGCYTYILSLQARELLIAAKTRRVEKIKKMQARLDKVEQLLQESPFPGASVWLEEIDAVEKAIIKGRNTQWKFH</sequence>
<name>TOP2_ASFWA</name>
<comment type="function">
    <text evidence="3">Type II topoisomerase. Processively relaxes supercoiled DNA. Displays DNA-supercoiling activity only when associated with the viral histone-like protein.</text>
</comment>
<comment type="catalytic activity">
    <reaction evidence="4">
        <text>ATP-dependent breakage, passage and rejoining of double-stranded DNA.</text>
        <dbReference type="EC" id="5.6.2.2"/>
    </reaction>
</comment>
<comment type="cofactor">
    <cofactor evidence="2">
        <name>Mg(2+)</name>
        <dbReference type="ChEBI" id="CHEBI:18420"/>
    </cofactor>
    <cofactor evidence="2">
        <name>Mn(2+)</name>
        <dbReference type="ChEBI" id="CHEBI:29035"/>
    </cofactor>
    <cofactor evidence="2">
        <name>Ca(2+)</name>
        <dbReference type="ChEBI" id="CHEBI:29108"/>
    </cofactor>
    <text evidence="2">Binds two Mg(2+) per subunit. The magnesium ions form salt bridges with both the protein and the DNA. Can also accept other divalent metal cations, such as Mn(2+) or Ca(2+).</text>
</comment>
<comment type="subcellular location">
    <subcellularLocation>
        <location evidence="3">Host cytoplasm</location>
    </subcellularLocation>
    <text evidence="3">Localizes to the cytoplasmic viral factories.</text>
</comment>
<comment type="induction">
    <text evidence="5">Expressed in the early phase of the viral replicative cycle.</text>
</comment>
<comment type="similarity">
    <text evidence="5">Belongs to the type II topoisomerase family.</text>
</comment>
<feature type="chain" id="PRO_0000373131" description="DNA topoisomerase 2">
    <location>
        <begin position="1"/>
        <end position="1192"/>
    </location>
</feature>
<feature type="domain" description="Topo IIA-type catalytic" evidence="4">
    <location>
        <begin position="707"/>
        <end position="1174"/>
    </location>
</feature>
<feature type="active site" description="O-(5'-phospho-DNA)-tyrosine intermediate" evidence="4">
    <location>
        <position position="800"/>
    </location>
</feature>
<feature type="binding site" evidence="1">
    <location>
        <position position="64"/>
    </location>
    <ligand>
        <name>ATP</name>
        <dbReference type="ChEBI" id="CHEBI:30616"/>
    </ligand>
</feature>
<feature type="binding site" evidence="1">
    <location>
        <position position="95"/>
    </location>
    <ligand>
        <name>ATP</name>
        <dbReference type="ChEBI" id="CHEBI:30616"/>
    </ligand>
</feature>
<feature type="binding site" evidence="3">
    <location>
        <begin position="142"/>
        <end position="149"/>
    </location>
    <ligand>
        <name>ATP</name>
        <dbReference type="ChEBI" id="CHEBI:30616"/>
    </ligand>
</feature>
<feature type="binding site" evidence="2">
    <location>
        <position position="438"/>
    </location>
    <ligand>
        <name>Mg(2+)</name>
        <dbReference type="ChEBI" id="CHEBI:18420"/>
        <label>1</label>
        <note>catalytic</note>
    </ligand>
</feature>
<feature type="binding site" evidence="2">
    <location>
        <position position="539"/>
    </location>
    <ligand>
        <name>Mg(2+)</name>
        <dbReference type="ChEBI" id="CHEBI:18420"/>
        <label>1</label>
        <note>catalytic</note>
    </ligand>
</feature>
<feature type="binding site" evidence="2">
    <location>
        <position position="539"/>
    </location>
    <ligand>
        <name>Mg(2+)</name>
        <dbReference type="ChEBI" id="CHEBI:18420"/>
        <label>2</label>
    </ligand>
</feature>
<feature type="binding site" evidence="2">
    <location>
        <position position="541"/>
    </location>
    <ligand>
        <name>Mg(2+)</name>
        <dbReference type="ChEBI" id="CHEBI:18420"/>
        <label>2</label>
    </ligand>
</feature>
<feature type="site" description="Transition state stabilizer" evidence="1">
    <location>
        <position position="799"/>
    </location>
</feature>
<accession>P0C9C1</accession>
<keyword id="KW-0067">ATP-binding</keyword>
<keyword id="KW-0238">DNA-binding</keyword>
<keyword id="KW-0244">Early protein</keyword>
<keyword id="KW-1035">Host cytoplasm</keyword>
<keyword id="KW-0413">Isomerase</keyword>
<keyword id="KW-0426">Late protein</keyword>
<keyword id="KW-0460">Magnesium</keyword>
<keyword id="KW-0479">Metal-binding</keyword>
<keyword id="KW-0547">Nucleotide-binding</keyword>
<keyword id="KW-0799">Topoisomerase</keyword>
<proteinExistence type="inferred from homology"/>
<dbReference type="EC" id="5.6.2.2" evidence="4"/>
<dbReference type="EMBL" id="AY261366">
    <property type="status" value="NOT_ANNOTATED_CDS"/>
    <property type="molecule type" value="Genomic_DNA"/>
</dbReference>
<dbReference type="SMR" id="P0C9C1"/>
<dbReference type="Proteomes" id="UP000000858">
    <property type="component" value="Segment"/>
</dbReference>
<dbReference type="GO" id="GO:0030430">
    <property type="term" value="C:host cell cytoplasm"/>
    <property type="evidence" value="ECO:0007669"/>
    <property type="project" value="UniProtKB-SubCell"/>
</dbReference>
<dbReference type="GO" id="GO:0005524">
    <property type="term" value="F:ATP binding"/>
    <property type="evidence" value="ECO:0007669"/>
    <property type="project" value="UniProtKB-KW"/>
</dbReference>
<dbReference type="GO" id="GO:0003677">
    <property type="term" value="F:DNA binding"/>
    <property type="evidence" value="ECO:0007669"/>
    <property type="project" value="UniProtKB-KW"/>
</dbReference>
<dbReference type="GO" id="GO:0003918">
    <property type="term" value="F:DNA topoisomerase type II (double strand cut, ATP-hydrolyzing) activity"/>
    <property type="evidence" value="ECO:0007669"/>
    <property type="project" value="UniProtKB-EC"/>
</dbReference>
<dbReference type="GO" id="GO:0046872">
    <property type="term" value="F:metal ion binding"/>
    <property type="evidence" value="ECO:0007669"/>
    <property type="project" value="UniProtKB-KW"/>
</dbReference>
<dbReference type="GO" id="GO:0006265">
    <property type="term" value="P:DNA topological change"/>
    <property type="evidence" value="ECO:0007669"/>
    <property type="project" value="InterPro"/>
</dbReference>
<dbReference type="GO" id="GO:0000819">
    <property type="term" value="P:sister chromatid segregation"/>
    <property type="evidence" value="ECO:0007669"/>
    <property type="project" value="TreeGrafter"/>
</dbReference>
<dbReference type="FunFam" id="3.40.50.670:FF:000001">
    <property type="entry name" value="DNA topoisomerase 2"/>
    <property type="match status" value="1"/>
</dbReference>
<dbReference type="Gene3D" id="3.30.1360.40">
    <property type="match status" value="1"/>
</dbReference>
<dbReference type="Gene3D" id="3.30.1490.30">
    <property type="match status" value="1"/>
</dbReference>
<dbReference type="Gene3D" id="3.30.230.10">
    <property type="match status" value="1"/>
</dbReference>
<dbReference type="Gene3D" id="3.40.50.670">
    <property type="match status" value="1"/>
</dbReference>
<dbReference type="Gene3D" id="3.30.565.10">
    <property type="entry name" value="Histidine kinase-like ATPase, C-terminal domain"/>
    <property type="match status" value="1"/>
</dbReference>
<dbReference type="Gene3D" id="3.90.199.10">
    <property type="entry name" value="Topoisomerase II, domain 5"/>
    <property type="match status" value="1"/>
</dbReference>
<dbReference type="Gene3D" id="1.10.268.10">
    <property type="entry name" value="Topoisomerase, domain 3"/>
    <property type="match status" value="1"/>
</dbReference>
<dbReference type="InterPro" id="IPR050634">
    <property type="entry name" value="DNA_Topoisomerase_II"/>
</dbReference>
<dbReference type="InterPro" id="IPR036890">
    <property type="entry name" value="HATPase_C_sf"/>
</dbReference>
<dbReference type="InterPro" id="IPR014721">
    <property type="entry name" value="Ribsml_uS5_D2-typ_fold_subgr"/>
</dbReference>
<dbReference type="InterPro" id="IPR001241">
    <property type="entry name" value="Topo_IIA"/>
</dbReference>
<dbReference type="InterPro" id="IPR013760">
    <property type="entry name" value="Topo_IIA-like_dom_sf"/>
</dbReference>
<dbReference type="InterPro" id="IPR013758">
    <property type="entry name" value="Topo_IIA_A/C_ab"/>
</dbReference>
<dbReference type="InterPro" id="IPR013757">
    <property type="entry name" value="Topo_IIA_A_a_sf"/>
</dbReference>
<dbReference type="InterPro" id="IPR013759">
    <property type="entry name" value="Topo_IIA_B_C"/>
</dbReference>
<dbReference type="InterPro" id="IPR002205">
    <property type="entry name" value="Topo_IIA_dom_A"/>
</dbReference>
<dbReference type="InterPro" id="IPR001154">
    <property type="entry name" value="TopoII_euk"/>
</dbReference>
<dbReference type="InterPro" id="IPR018522">
    <property type="entry name" value="TopoIIA_CS"/>
</dbReference>
<dbReference type="InterPro" id="IPR031660">
    <property type="entry name" value="TOPRIM_C"/>
</dbReference>
<dbReference type="PANTHER" id="PTHR10169:SF50">
    <property type="entry name" value="DNA TOPOISOMERASE 2"/>
    <property type="match status" value="1"/>
</dbReference>
<dbReference type="PANTHER" id="PTHR10169">
    <property type="entry name" value="DNA TOPOISOMERASE/GYRASE"/>
    <property type="match status" value="1"/>
</dbReference>
<dbReference type="Pfam" id="PF00521">
    <property type="entry name" value="DNA_topoisoIV"/>
    <property type="match status" value="1"/>
</dbReference>
<dbReference type="Pfam" id="PF16898">
    <property type="entry name" value="TOPRIM_C"/>
    <property type="match status" value="1"/>
</dbReference>
<dbReference type="PRINTS" id="PR01158">
    <property type="entry name" value="TOPISMRASEII"/>
</dbReference>
<dbReference type="PRINTS" id="PR00418">
    <property type="entry name" value="TPI2FAMILY"/>
</dbReference>
<dbReference type="SMART" id="SM00433">
    <property type="entry name" value="TOP2c"/>
    <property type="match status" value="1"/>
</dbReference>
<dbReference type="SMART" id="SM00434">
    <property type="entry name" value="TOP4c"/>
    <property type="match status" value="1"/>
</dbReference>
<dbReference type="SUPFAM" id="SSF55874">
    <property type="entry name" value="ATPase domain of HSP90 chaperone/DNA topoisomerase II/histidine kinase"/>
    <property type="match status" value="1"/>
</dbReference>
<dbReference type="SUPFAM" id="SSF56719">
    <property type="entry name" value="Type II DNA topoisomerase"/>
    <property type="match status" value="1"/>
</dbReference>
<dbReference type="PROSITE" id="PS52040">
    <property type="entry name" value="TOPO_IIA"/>
    <property type="match status" value="1"/>
</dbReference>
<dbReference type="PROSITE" id="PS00177">
    <property type="entry name" value="TOPOISOMERASE_II"/>
    <property type="match status" value="1"/>
</dbReference>
<organismHost>
    <name type="scientific">Ornithodoros</name>
    <name type="common">relapsing fever ticks</name>
    <dbReference type="NCBI Taxonomy" id="6937"/>
</organismHost>
<organismHost>
    <name type="scientific">Phacochoerus aethiopicus</name>
    <name type="common">Warthog</name>
    <dbReference type="NCBI Taxonomy" id="85517"/>
</organismHost>
<organismHost>
    <name type="scientific">Phacochoerus africanus</name>
    <name type="common">Warthog</name>
    <dbReference type="NCBI Taxonomy" id="41426"/>
</organismHost>
<organismHost>
    <name type="scientific">Potamochoerus larvatus</name>
    <name type="common">Bushpig</name>
    <dbReference type="NCBI Taxonomy" id="273792"/>
</organismHost>
<organismHost>
    <name type="scientific">Sus scrofa</name>
    <name type="common">Pig</name>
    <dbReference type="NCBI Taxonomy" id="9823"/>
</organismHost>
<evidence type="ECO:0000250" key="1"/>
<evidence type="ECO:0000250" key="2">
    <source>
        <dbReference type="UniProtKB" id="P11388"/>
    </source>
</evidence>
<evidence type="ECO:0000250" key="3">
    <source>
        <dbReference type="UniProtKB" id="Q00942"/>
    </source>
</evidence>
<evidence type="ECO:0000255" key="4">
    <source>
        <dbReference type="PROSITE-ProRule" id="PRU01384"/>
    </source>
</evidence>
<evidence type="ECO:0000305" key="5"/>
<organism>
    <name type="scientific">African swine fever virus (isolate Warthog/Namibia/Wart80/1980)</name>
    <name type="common">ASFV</name>
    <dbReference type="NCBI Taxonomy" id="561444"/>
    <lineage>
        <taxon>Viruses</taxon>
        <taxon>Varidnaviria</taxon>
        <taxon>Bamfordvirae</taxon>
        <taxon>Nucleocytoviricota</taxon>
        <taxon>Pokkesviricetes</taxon>
        <taxon>Asfuvirales</taxon>
        <taxon>Asfarviridae</taxon>
        <taxon>Asfivirus</taxon>
        <taxon>African swine fever virus</taxon>
    </lineage>
</organism>
<gene>
    <name type="ordered locus">War-122</name>
</gene>
<reference key="1">
    <citation type="submission" date="2003-03" db="EMBL/GenBank/DDBJ databases">
        <title>African swine fever virus genomes.</title>
        <authorList>
            <person name="Kutish G.F."/>
            <person name="Rock D.L."/>
        </authorList>
    </citation>
    <scope>NUCLEOTIDE SEQUENCE [LARGE SCALE GENOMIC DNA]</scope>
</reference>
<protein>
    <recommendedName>
        <fullName evidence="3">DNA topoisomerase 2</fullName>
        <ecNumber evidence="4">5.6.2.2</ecNumber>
    </recommendedName>
    <alternativeName>
        <fullName>DNA topoisomerase II</fullName>
    </alternativeName>
</protein>